<accession>Q1RB89</accession>
<comment type="function">
    <text evidence="1">Nucleotidyltransferase involved in the post-translational modification of proteins. It can catalyze the addition of adenosine monophosphate (AMP) or uridine monophosphate (UMP) to a protein, resulting in modifications known as AMPylation and UMPylation.</text>
</comment>
<comment type="catalytic activity">
    <reaction evidence="1">
        <text>L-seryl-[protein] + ATP = 3-O-(5'-adenylyl)-L-seryl-[protein] + diphosphate</text>
        <dbReference type="Rhea" id="RHEA:58120"/>
        <dbReference type="Rhea" id="RHEA-COMP:9863"/>
        <dbReference type="Rhea" id="RHEA-COMP:15073"/>
        <dbReference type="ChEBI" id="CHEBI:29999"/>
        <dbReference type="ChEBI" id="CHEBI:30616"/>
        <dbReference type="ChEBI" id="CHEBI:33019"/>
        <dbReference type="ChEBI" id="CHEBI:142516"/>
        <dbReference type="EC" id="2.7.7.108"/>
    </reaction>
</comment>
<comment type="catalytic activity">
    <reaction evidence="1">
        <text>L-threonyl-[protein] + ATP = 3-O-(5'-adenylyl)-L-threonyl-[protein] + diphosphate</text>
        <dbReference type="Rhea" id="RHEA:54292"/>
        <dbReference type="Rhea" id="RHEA-COMP:11060"/>
        <dbReference type="Rhea" id="RHEA-COMP:13847"/>
        <dbReference type="ChEBI" id="CHEBI:30013"/>
        <dbReference type="ChEBI" id="CHEBI:30616"/>
        <dbReference type="ChEBI" id="CHEBI:33019"/>
        <dbReference type="ChEBI" id="CHEBI:138113"/>
        <dbReference type="EC" id="2.7.7.108"/>
    </reaction>
</comment>
<comment type="catalytic activity">
    <reaction evidence="1">
        <text>L-tyrosyl-[protein] + ATP = O-(5'-adenylyl)-L-tyrosyl-[protein] + diphosphate</text>
        <dbReference type="Rhea" id="RHEA:54288"/>
        <dbReference type="Rhea" id="RHEA-COMP:10136"/>
        <dbReference type="Rhea" id="RHEA-COMP:13846"/>
        <dbReference type="ChEBI" id="CHEBI:30616"/>
        <dbReference type="ChEBI" id="CHEBI:33019"/>
        <dbReference type="ChEBI" id="CHEBI:46858"/>
        <dbReference type="ChEBI" id="CHEBI:83624"/>
        <dbReference type="EC" id="2.7.7.108"/>
    </reaction>
</comment>
<comment type="catalytic activity">
    <reaction evidence="1">
        <text>L-histidyl-[protein] + UTP = N(tele)-(5'-uridylyl)-L-histidyl-[protein] + diphosphate</text>
        <dbReference type="Rhea" id="RHEA:83891"/>
        <dbReference type="Rhea" id="RHEA-COMP:9745"/>
        <dbReference type="Rhea" id="RHEA-COMP:20239"/>
        <dbReference type="ChEBI" id="CHEBI:29979"/>
        <dbReference type="ChEBI" id="CHEBI:33019"/>
        <dbReference type="ChEBI" id="CHEBI:46398"/>
        <dbReference type="ChEBI" id="CHEBI:233474"/>
    </reaction>
</comment>
<comment type="catalytic activity">
    <reaction evidence="1">
        <text>L-seryl-[protein] + UTP = O-(5'-uridylyl)-L-seryl-[protein] + diphosphate</text>
        <dbReference type="Rhea" id="RHEA:64604"/>
        <dbReference type="Rhea" id="RHEA-COMP:9863"/>
        <dbReference type="Rhea" id="RHEA-COMP:16635"/>
        <dbReference type="ChEBI" id="CHEBI:29999"/>
        <dbReference type="ChEBI" id="CHEBI:33019"/>
        <dbReference type="ChEBI" id="CHEBI:46398"/>
        <dbReference type="ChEBI" id="CHEBI:156051"/>
    </reaction>
</comment>
<comment type="catalytic activity">
    <reaction evidence="1">
        <text>L-tyrosyl-[protein] + UTP = O-(5'-uridylyl)-L-tyrosyl-[protein] + diphosphate</text>
        <dbReference type="Rhea" id="RHEA:83887"/>
        <dbReference type="Rhea" id="RHEA-COMP:10136"/>
        <dbReference type="Rhea" id="RHEA-COMP:20238"/>
        <dbReference type="ChEBI" id="CHEBI:33019"/>
        <dbReference type="ChEBI" id="CHEBI:46398"/>
        <dbReference type="ChEBI" id="CHEBI:46858"/>
        <dbReference type="ChEBI" id="CHEBI:90602"/>
    </reaction>
</comment>
<comment type="cofactor">
    <cofactor evidence="1">
        <name>Mg(2+)</name>
        <dbReference type="ChEBI" id="CHEBI:18420"/>
    </cofactor>
    <cofactor evidence="1">
        <name>Mn(2+)</name>
        <dbReference type="ChEBI" id="CHEBI:29035"/>
    </cofactor>
</comment>
<comment type="similarity">
    <text evidence="1">Belongs to the SELO family.</text>
</comment>
<reference key="1">
    <citation type="journal article" date="2006" name="Proc. Natl. Acad. Sci. U.S.A.">
        <title>Identification of genes subject to positive selection in uropathogenic strains of Escherichia coli: a comparative genomics approach.</title>
        <authorList>
            <person name="Chen S.L."/>
            <person name="Hung C.-S."/>
            <person name="Xu J."/>
            <person name="Reigstad C.S."/>
            <person name="Magrini V."/>
            <person name="Sabo A."/>
            <person name="Blasiar D."/>
            <person name="Bieri T."/>
            <person name="Meyer R.R."/>
            <person name="Ozersky P."/>
            <person name="Armstrong J.R."/>
            <person name="Fulton R.S."/>
            <person name="Latreille J.P."/>
            <person name="Spieth J."/>
            <person name="Hooton T.M."/>
            <person name="Mardis E.R."/>
            <person name="Hultgren S.J."/>
            <person name="Gordon J.I."/>
        </authorList>
    </citation>
    <scope>NUCLEOTIDE SEQUENCE [LARGE SCALE GENOMIC DNA]</scope>
    <source>
        <strain>UTI89 / UPEC</strain>
    </source>
</reference>
<name>SELO_ECOUT</name>
<feature type="chain" id="PRO_0000271826" description="Protein nucleotidyltransferase YdiU">
    <location>
        <begin position="1"/>
        <end position="478"/>
    </location>
</feature>
<feature type="active site" description="Proton acceptor" evidence="1">
    <location>
        <position position="246"/>
    </location>
</feature>
<feature type="binding site" evidence="1">
    <location>
        <position position="84"/>
    </location>
    <ligand>
        <name>ATP</name>
        <dbReference type="ChEBI" id="CHEBI:30616"/>
    </ligand>
</feature>
<feature type="binding site" evidence="1">
    <location>
        <position position="86"/>
    </location>
    <ligand>
        <name>ATP</name>
        <dbReference type="ChEBI" id="CHEBI:30616"/>
    </ligand>
</feature>
<feature type="binding site" evidence="1">
    <location>
        <position position="87"/>
    </location>
    <ligand>
        <name>ATP</name>
        <dbReference type="ChEBI" id="CHEBI:30616"/>
    </ligand>
</feature>
<feature type="binding site" evidence="1">
    <location>
        <position position="107"/>
    </location>
    <ligand>
        <name>ATP</name>
        <dbReference type="ChEBI" id="CHEBI:30616"/>
    </ligand>
</feature>
<feature type="binding site" evidence="1">
    <location>
        <position position="119"/>
    </location>
    <ligand>
        <name>ATP</name>
        <dbReference type="ChEBI" id="CHEBI:30616"/>
    </ligand>
</feature>
<feature type="binding site" evidence="1">
    <location>
        <position position="120"/>
    </location>
    <ligand>
        <name>ATP</name>
        <dbReference type="ChEBI" id="CHEBI:30616"/>
    </ligand>
</feature>
<feature type="binding site" evidence="1">
    <location>
        <position position="170"/>
    </location>
    <ligand>
        <name>ATP</name>
        <dbReference type="ChEBI" id="CHEBI:30616"/>
    </ligand>
</feature>
<feature type="binding site" evidence="1">
    <location>
        <position position="177"/>
    </location>
    <ligand>
        <name>ATP</name>
        <dbReference type="ChEBI" id="CHEBI:30616"/>
    </ligand>
</feature>
<feature type="binding site" evidence="1">
    <location>
        <position position="247"/>
    </location>
    <ligand>
        <name>Mg(2+)</name>
        <dbReference type="ChEBI" id="CHEBI:18420"/>
    </ligand>
</feature>
<feature type="binding site" evidence="1">
    <location>
        <position position="256"/>
    </location>
    <ligand>
        <name>ATP</name>
        <dbReference type="ChEBI" id="CHEBI:30616"/>
    </ligand>
</feature>
<feature type="binding site" evidence="1">
    <location>
        <position position="256"/>
    </location>
    <ligand>
        <name>Mg(2+)</name>
        <dbReference type="ChEBI" id="CHEBI:18420"/>
    </ligand>
</feature>
<sequence>MTLSFITRWRDELPETYTALSPTPLNNARLIWHNTELANTLSIPSSLFKNGAGVWGGENLLPGMSPLAQVYSGHQFGVWAGQLGDGRGILLGEQLLADGTTMDWHLKGAGLTPYSRMGDGRAVLRSTIRESLASEAMHYLGIPTTRALSIVTSDSPVYRETVESGAMLMRVAPSHLRFGHFEHFYYRREPEKVRQLADFAIRHYWSHLDDEEDKYRLWFTDVVARTASLIAQWQTVGFAHGVMNTDNMSLLGLTLDYGPFGFLDDYEPGFICNHSDHQGRYSFDNQPAVALWNLQRLAQTLSPFVAVDALNEALDSYQQVLLTHYGQRMRQKLGFMTEQKEDNALLNELFSLMARERSDYTRTFRMLSLTEQHSAASPLRDEFIDRAAFDDWFARYRGRLQQDEITDSERQQLMQSVNPALVLRNWLAQRAIEAAEKDDMTELHRLHEALRNPFSDRDDDYVSRPPDWGKRLEVSCSS</sequence>
<dbReference type="EC" id="2.7.7.-" evidence="1"/>
<dbReference type="EC" id="2.7.7.108" evidence="1"/>
<dbReference type="EMBL" id="CP000243">
    <property type="protein sequence ID" value="ABE07375.1"/>
    <property type="molecule type" value="Genomic_DNA"/>
</dbReference>
<dbReference type="RefSeq" id="WP_000175635.1">
    <property type="nucleotide sequence ID" value="NZ_CP064825.1"/>
</dbReference>
<dbReference type="SMR" id="Q1RB89"/>
<dbReference type="KEGG" id="eci:UTI89_C1899"/>
<dbReference type="HOGENOM" id="CLU_010245_4_0_6"/>
<dbReference type="Proteomes" id="UP000001952">
    <property type="component" value="Chromosome"/>
</dbReference>
<dbReference type="GO" id="GO:0070733">
    <property type="term" value="F:AMPylase activity"/>
    <property type="evidence" value="ECO:0007669"/>
    <property type="project" value="TreeGrafter"/>
</dbReference>
<dbReference type="GO" id="GO:0005524">
    <property type="term" value="F:ATP binding"/>
    <property type="evidence" value="ECO:0007669"/>
    <property type="project" value="UniProtKB-UniRule"/>
</dbReference>
<dbReference type="GO" id="GO:0000287">
    <property type="term" value="F:magnesium ion binding"/>
    <property type="evidence" value="ECO:0007669"/>
    <property type="project" value="UniProtKB-UniRule"/>
</dbReference>
<dbReference type="HAMAP" id="MF_00692">
    <property type="entry name" value="YdiU_SelO"/>
    <property type="match status" value="1"/>
</dbReference>
<dbReference type="InterPro" id="IPR054838">
    <property type="entry name" value="adnlytase_SelO"/>
</dbReference>
<dbReference type="InterPro" id="IPR003846">
    <property type="entry name" value="SelO"/>
</dbReference>
<dbReference type="NCBIfam" id="NF040880">
    <property type="entry name" value="adnlytase_SelO"/>
    <property type="match status" value="1"/>
</dbReference>
<dbReference type="NCBIfam" id="NF000658">
    <property type="entry name" value="PRK00029.1"/>
    <property type="match status" value="1"/>
</dbReference>
<dbReference type="PANTHER" id="PTHR32057">
    <property type="entry name" value="PROTEIN ADENYLYLTRANSFERASE SELO, MITOCHONDRIAL"/>
    <property type="match status" value="1"/>
</dbReference>
<dbReference type="PANTHER" id="PTHR32057:SF14">
    <property type="entry name" value="PROTEIN ADENYLYLTRANSFERASE SELO, MITOCHONDRIAL"/>
    <property type="match status" value="1"/>
</dbReference>
<dbReference type="Pfam" id="PF02696">
    <property type="entry name" value="SelO"/>
    <property type="match status" value="1"/>
</dbReference>
<organism>
    <name type="scientific">Escherichia coli (strain UTI89 / UPEC)</name>
    <dbReference type="NCBI Taxonomy" id="364106"/>
    <lineage>
        <taxon>Bacteria</taxon>
        <taxon>Pseudomonadati</taxon>
        <taxon>Pseudomonadota</taxon>
        <taxon>Gammaproteobacteria</taxon>
        <taxon>Enterobacterales</taxon>
        <taxon>Enterobacteriaceae</taxon>
        <taxon>Escherichia</taxon>
    </lineage>
</organism>
<evidence type="ECO:0000255" key="1">
    <source>
        <dbReference type="HAMAP-Rule" id="MF_00692"/>
    </source>
</evidence>
<keyword id="KW-0067">ATP-binding</keyword>
<keyword id="KW-0460">Magnesium</keyword>
<keyword id="KW-0464">Manganese</keyword>
<keyword id="KW-0479">Metal-binding</keyword>
<keyword id="KW-0547">Nucleotide-binding</keyword>
<keyword id="KW-0548">Nucleotidyltransferase</keyword>
<keyword id="KW-0808">Transferase</keyword>
<protein>
    <recommendedName>
        <fullName evidence="1">Protein nucleotidyltransferase YdiU</fullName>
        <ecNumber evidence="1">2.7.7.-</ecNumber>
    </recommendedName>
    <alternativeName>
        <fullName evidence="1">Protein adenylyltransferase YdiU</fullName>
        <ecNumber evidence="1">2.7.7.108</ecNumber>
    </alternativeName>
    <alternativeName>
        <fullName evidence="1">Protein uridylyltransferase YdiU</fullName>
        <ecNumber evidence="1">2.7.7.-</ecNumber>
    </alternativeName>
</protein>
<gene>
    <name evidence="1" type="primary">ydiU</name>
    <name evidence="1" type="synonym">selO</name>
    <name type="ordered locus">UTI89_C1899</name>
</gene>
<proteinExistence type="inferred from homology"/>